<protein>
    <recommendedName>
        <fullName>Regulatory protein RecX</fullName>
    </recommendedName>
</protein>
<sequence length="153" mass="17716">MKPQKSLRARAMDILSRQELSRIGLKRKLAPHAESEEELENVLNEFAERNWQSDLRYAEAYIRSKSRKHGSLRLKQALAQQGIDEETSRNLLPDRSSEKLAAIAVLRKKFKHPAADLKEKQKQARFLAYRGFDADTVQTALKHAWDENWEDGC</sequence>
<accession>Q9JTP4</accession>
<accession>A1ISQ8</accession>
<gene>
    <name type="primary">recX</name>
    <name type="ordered locus">NMA1689</name>
</gene>
<feature type="chain" id="PRO_0000162453" description="Regulatory protein RecX">
    <location>
        <begin position="1"/>
        <end position="153"/>
    </location>
</feature>
<organism>
    <name type="scientific">Neisseria meningitidis serogroup A / serotype 4A (strain DSM 15465 / Z2491)</name>
    <dbReference type="NCBI Taxonomy" id="122587"/>
    <lineage>
        <taxon>Bacteria</taxon>
        <taxon>Pseudomonadati</taxon>
        <taxon>Pseudomonadota</taxon>
        <taxon>Betaproteobacteria</taxon>
        <taxon>Neisseriales</taxon>
        <taxon>Neisseriaceae</taxon>
        <taxon>Neisseria</taxon>
    </lineage>
</organism>
<dbReference type="EMBL" id="AL157959">
    <property type="protein sequence ID" value="CAM08820.1"/>
    <property type="molecule type" value="Genomic_DNA"/>
</dbReference>
<dbReference type="PIR" id="D81864">
    <property type="entry name" value="D81864"/>
</dbReference>
<dbReference type="RefSeq" id="WP_002235024.1">
    <property type="nucleotide sequence ID" value="NC_003116.1"/>
</dbReference>
<dbReference type="SMR" id="Q9JTP4"/>
<dbReference type="DNASU" id="908078"/>
<dbReference type="EnsemblBacteria" id="CAM08820">
    <property type="protein sequence ID" value="CAM08820"/>
    <property type="gene ID" value="NMA1689"/>
</dbReference>
<dbReference type="GeneID" id="93387893"/>
<dbReference type="KEGG" id="nma:NMA1689"/>
<dbReference type="HOGENOM" id="CLU_066607_3_1_4"/>
<dbReference type="Proteomes" id="UP000000626">
    <property type="component" value="Chromosome"/>
</dbReference>
<dbReference type="GO" id="GO:0005737">
    <property type="term" value="C:cytoplasm"/>
    <property type="evidence" value="ECO:0007669"/>
    <property type="project" value="UniProtKB-SubCell"/>
</dbReference>
<dbReference type="GO" id="GO:0006282">
    <property type="term" value="P:regulation of DNA repair"/>
    <property type="evidence" value="ECO:0007669"/>
    <property type="project" value="UniProtKB-UniRule"/>
</dbReference>
<dbReference type="Gene3D" id="1.10.10.10">
    <property type="entry name" value="Winged helix-like DNA-binding domain superfamily/Winged helix DNA-binding domain"/>
    <property type="match status" value="3"/>
</dbReference>
<dbReference type="HAMAP" id="MF_01114">
    <property type="entry name" value="RecX"/>
    <property type="match status" value="1"/>
</dbReference>
<dbReference type="InterPro" id="IPR053924">
    <property type="entry name" value="RecX_HTH_2nd"/>
</dbReference>
<dbReference type="InterPro" id="IPR053925">
    <property type="entry name" value="RecX_HTH_3rd"/>
</dbReference>
<dbReference type="InterPro" id="IPR003783">
    <property type="entry name" value="Regulatory_RecX"/>
</dbReference>
<dbReference type="InterPro" id="IPR036388">
    <property type="entry name" value="WH-like_DNA-bd_sf"/>
</dbReference>
<dbReference type="NCBIfam" id="NF001055">
    <property type="entry name" value="PRK00117.2-5"/>
    <property type="match status" value="1"/>
</dbReference>
<dbReference type="PANTHER" id="PTHR33602">
    <property type="entry name" value="REGULATORY PROTEIN RECX FAMILY PROTEIN"/>
    <property type="match status" value="1"/>
</dbReference>
<dbReference type="PANTHER" id="PTHR33602:SF1">
    <property type="entry name" value="REGULATORY PROTEIN RECX FAMILY PROTEIN"/>
    <property type="match status" value="1"/>
</dbReference>
<dbReference type="Pfam" id="PF02631">
    <property type="entry name" value="RecX_HTH2"/>
    <property type="match status" value="1"/>
</dbReference>
<dbReference type="Pfam" id="PF21981">
    <property type="entry name" value="RecX_HTH3"/>
    <property type="match status" value="1"/>
</dbReference>
<name>RECX_NEIMA</name>
<proteinExistence type="inferred from homology"/>
<reference key="1">
    <citation type="journal article" date="2000" name="Nature">
        <title>Complete DNA sequence of a serogroup A strain of Neisseria meningitidis Z2491.</title>
        <authorList>
            <person name="Parkhill J."/>
            <person name="Achtman M."/>
            <person name="James K.D."/>
            <person name="Bentley S.D."/>
            <person name="Churcher C.M."/>
            <person name="Klee S.R."/>
            <person name="Morelli G."/>
            <person name="Basham D."/>
            <person name="Brown D."/>
            <person name="Chillingworth T."/>
            <person name="Davies R.M."/>
            <person name="Davis P."/>
            <person name="Devlin K."/>
            <person name="Feltwell T."/>
            <person name="Hamlin N."/>
            <person name="Holroyd S."/>
            <person name="Jagels K."/>
            <person name="Leather S."/>
            <person name="Moule S."/>
            <person name="Mungall K.L."/>
            <person name="Quail M.A."/>
            <person name="Rajandream M.A."/>
            <person name="Rutherford K.M."/>
            <person name="Simmonds M."/>
            <person name="Skelton J."/>
            <person name="Whitehead S."/>
            <person name="Spratt B.G."/>
            <person name="Barrell B.G."/>
        </authorList>
    </citation>
    <scope>NUCLEOTIDE SEQUENCE [LARGE SCALE GENOMIC DNA]</scope>
    <source>
        <strain>DSM 15465 / Z2491</strain>
    </source>
</reference>
<comment type="function">
    <text evidence="1">Modulates RecA activity.</text>
</comment>
<comment type="subcellular location">
    <subcellularLocation>
        <location evidence="2">Cytoplasm</location>
    </subcellularLocation>
</comment>
<comment type="similarity">
    <text evidence="2">Belongs to the RecX family.</text>
</comment>
<evidence type="ECO:0000250" key="1"/>
<evidence type="ECO:0000305" key="2"/>
<keyword id="KW-0963">Cytoplasm</keyword>